<accession>A8GYP8</accession>
<dbReference type="EC" id="1.1.1.103" evidence="1"/>
<dbReference type="EMBL" id="CP000851">
    <property type="protein sequence ID" value="ABV85435.1"/>
    <property type="molecule type" value="Genomic_DNA"/>
</dbReference>
<dbReference type="RefSeq" id="WP_012153381.1">
    <property type="nucleotide sequence ID" value="NC_009901.1"/>
</dbReference>
<dbReference type="SMR" id="A8GYP8"/>
<dbReference type="STRING" id="398579.Spea_0106"/>
<dbReference type="KEGG" id="spl:Spea_0106"/>
<dbReference type="eggNOG" id="COG1063">
    <property type="taxonomic scope" value="Bacteria"/>
</dbReference>
<dbReference type="HOGENOM" id="CLU_026673_11_0_6"/>
<dbReference type="OrthoDB" id="9773078at2"/>
<dbReference type="UniPathway" id="UPA00046">
    <property type="reaction ID" value="UER00505"/>
</dbReference>
<dbReference type="Proteomes" id="UP000002608">
    <property type="component" value="Chromosome"/>
</dbReference>
<dbReference type="GO" id="GO:0005737">
    <property type="term" value="C:cytoplasm"/>
    <property type="evidence" value="ECO:0007669"/>
    <property type="project" value="UniProtKB-SubCell"/>
</dbReference>
<dbReference type="GO" id="GO:0008743">
    <property type="term" value="F:L-threonine 3-dehydrogenase activity"/>
    <property type="evidence" value="ECO:0007669"/>
    <property type="project" value="UniProtKB-UniRule"/>
</dbReference>
<dbReference type="GO" id="GO:0008270">
    <property type="term" value="F:zinc ion binding"/>
    <property type="evidence" value="ECO:0007669"/>
    <property type="project" value="UniProtKB-UniRule"/>
</dbReference>
<dbReference type="GO" id="GO:0019518">
    <property type="term" value="P:L-threonine catabolic process to glycine"/>
    <property type="evidence" value="ECO:0007669"/>
    <property type="project" value="UniProtKB-UniPathway"/>
</dbReference>
<dbReference type="Gene3D" id="3.90.180.10">
    <property type="entry name" value="Medium-chain alcohol dehydrogenases, catalytic domain"/>
    <property type="match status" value="1"/>
</dbReference>
<dbReference type="Gene3D" id="3.40.50.720">
    <property type="entry name" value="NAD(P)-binding Rossmann-like Domain"/>
    <property type="match status" value="1"/>
</dbReference>
<dbReference type="HAMAP" id="MF_00627">
    <property type="entry name" value="Thr_dehydrog"/>
    <property type="match status" value="1"/>
</dbReference>
<dbReference type="InterPro" id="IPR013149">
    <property type="entry name" value="ADH-like_C"/>
</dbReference>
<dbReference type="InterPro" id="IPR013154">
    <property type="entry name" value="ADH-like_N"/>
</dbReference>
<dbReference type="InterPro" id="IPR002328">
    <property type="entry name" value="ADH_Zn_CS"/>
</dbReference>
<dbReference type="InterPro" id="IPR011032">
    <property type="entry name" value="GroES-like_sf"/>
</dbReference>
<dbReference type="InterPro" id="IPR004627">
    <property type="entry name" value="L-Threonine_3-DHase"/>
</dbReference>
<dbReference type="InterPro" id="IPR036291">
    <property type="entry name" value="NAD(P)-bd_dom_sf"/>
</dbReference>
<dbReference type="InterPro" id="IPR020843">
    <property type="entry name" value="PKS_ER"/>
</dbReference>
<dbReference type="InterPro" id="IPR050129">
    <property type="entry name" value="Zn_alcohol_dh"/>
</dbReference>
<dbReference type="NCBIfam" id="NF003808">
    <property type="entry name" value="PRK05396.1"/>
    <property type="match status" value="1"/>
</dbReference>
<dbReference type="NCBIfam" id="TIGR00692">
    <property type="entry name" value="tdh"/>
    <property type="match status" value="1"/>
</dbReference>
<dbReference type="PANTHER" id="PTHR43401">
    <property type="entry name" value="L-THREONINE 3-DEHYDROGENASE"/>
    <property type="match status" value="1"/>
</dbReference>
<dbReference type="PANTHER" id="PTHR43401:SF2">
    <property type="entry name" value="L-THREONINE 3-DEHYDROGENASE"/>
    <property type="match status" value="1"/>
</dbReference>
<dbReference type="Pfam" id="PF08240">
    <property type="entry name" value="ADH_N"/>
    <property type="match status" value="1"/>
</dbReference>
<dbReference type="Pfam" id="PF00107">
    <property type="entry name" value="ADH_zinc_N"/>
    <property type="match status" value="1"/>
</dbReference>
<dbReference type="SMART" id="SM00829">
    <property type="entry name" value="PKS_ER"/>
    <property type="match status" value="1"/>
</dbReference>
<dbReference type="SUPFAM" id="SSF50129">
    <property type="entry name" value="GroES-like"/>
    <property type="match status" value="1"/>
</dbReference>
<dbReference type="SUPFAM" id="SSF51735">
    <property type="entry name" value="NAD(P)-binding Rossmann-fold domains"/>
    <property type="match status" value="1"/>
</dbReference>
<dbReference type="PROSITE" id="PS00059">
    <property type="entry name" value="ADH_ZINC"/>
    <property type="match status" value="1"/>
</dbReference>
<protein>
    <recommendedName>
        <fullName evidence="1">L-threonine 3-dehydrogenase</fullName>
        <shortName evidence="1">TDH</shortName>
        <ecNumber evidence="1">1.1.1.103</ecNumber>
    </recommendedName>
</protein>
<keyword id="KW-0963">Cytoplasm</keyword>
<keyword id="KW-0479">Metal-binding</keyword>
<keyword id="KW-0520">NAD</keyword>
<keyword id="KW-0560">Oxidoreductase</keyword>
<keyword id="KW-1185">Reference proteome</keyword>
<keyword id="KW-0862">Zinc</keyword>
<name>TDH_SHEPA</name>
<organism>
    <name type="scientific">Shewanella pealeana (strain ATCC 700345 / ANG-SQ1)</name>
    <dbReference type="NCBI Taxonomy" id="398579"/>
    <lineage>
        <taxon>Bacteria</taxon>
        <taxon>Pseudomonadati</taxon>
        <taxon>Pseudomonadota</taxon>
        <taxon>Gammaproteobacteria</taxon>
        <taxon>Alteromonadales</taxon>
        <taxon>Shewanellaceae</taxon>
        <taxon>Shewanella</taxon>
    </lineage>
</organism>
<gene>
    <name evidence="1" type="primary">tdh</name>
    <name type="ordered locus">Spea_0106</name>
</gene>
<proteinExistence type="inferred from homology"/>
<comment type="function">
    <text evidence="1">Catalyzes the NAD(+)-dependent oxidation of L-threonine to 2-amino-3-ketobutyrate.</text>
</comment>
<comment type="catalytic activity">
    <reaction evidence="1">
        <text>L-threonine + NAD(+) = (2S)-2-amino-3-oxobutanoate + NADH + H(+)</text>
        <dbReference type="Rhea" id="RHEA:13161"/>
        <dbReference type="ChEBI" id="CHEBI:15378"/>
        <dbReference type="ChEBI" id="CHEBI:57540"/>
        <dbReference type="ChEBI" id="CHEBI:57926"/>
        <dbReference type="ChEBI" id="CHEBI:57945"/>
        <dbReference type="ChEBI" id="CHEBI:78948"/>
        <dbReference type="EC" id="1.1.1.103"/>
    </reaction>
</comment>
<comment type="cofactor">
    <cofactor evidence="1">
        <name>Zn(2+)</name>
        <dbReference type="ChEBI" id="CHEBI:29105"/>
    </cofactor>
    <text evidence="1">Binds 2 Zn(2+) ions per subunit.</text>
</comment>
<comment type="pathway">
    <text evidence="1">Amino-acid degradation; L-threonine degradation via oxydo-reductase pathway; glycine from L-threonine: step 1/2.</text>
</comment>
<comment type="subunit">
    <text evidence="1">Homotetramer.</text>
</comment>
<comment type="subcellular location">
    <subcellularLocation>
        <location evidence="1">Cytoplasm</location>
    </subcellularLocation>
</comment>
<comment type="similarity">
    <text evidence="1">Belongs to the zinc-containing alcohol dehydrogenase family.</text>
</comment>
<evidence type="ECO:0000255" key="1">
    <source>
        <dbReference type="HAMAP-Rule" id="MF_00627"/>
    </source>
</evidence>
<feature type="chain" id="PRO_1000082617" description="L-threonine 3-dehydrogenase">
    <location>
        <begin position="1"/>
        <end position="341"/>
    </location>
</feature>
<feature type="active site" description="Charge relay system" evidence="1">
    <location>
        <position position="40"/>
    </location>
</feature>
<feature type="active site" description="Charge relay system" evidence="1">
    <location>
        <position position="43"/>
    </location>
</feature>
<feature type="binding site" evidence="1">
    <location>
        <position position="38"/>
    </location>
    <ligand>
        <name>Zn(2+)</name>
        <dbReference type="ChEBI" id="CHEBI:29105"/>
        <label>1</label>
        <note>catalytic</note>
    </ligand>
</feature>
<feature type="binding site" evidence="1">
    <location>
        <position position="63"/>
    </location>
    <ligand>
        <name>Zn(2+)</name>
        <dbReference type="ChEBI" id="CHEBI:29105"/>
        <label>1</label>
        <note>catalytic</note>
    </ligand>
</feature>
<feature type="binding site" evidence="1">
    <location>
        <position position="64"/>
    </location>
    <ligand>
        <name>Zn(2+)</name>
        <dbReference type="ChEBI" id="CHEBI:29105"/>
        <label>1</label>
        <note>catalytic</note>
    </ligand>
</feature>
<feature type="binding site" evidence="1">
    <location>
        <position position="93"/>
    </location>
    <ligand>
        <name>Zn(2+)</name>
        <dbReference type="ChEBI" id="CHEBI:29105"/>
        <label>2</label>
    </ligand>
</feature>
<feature type="binding site" evidence="1">
    <location>
        <position position="96"/>
    </location>
    <ligand>
        <name>Zn(2+)</name>
        <dbReference type="ChEBI" id="CHEBI:29105"/>
        <label>2</label>
    </ligand>
</feature>
<feature type="binding site" evidence="1">
    <location>
        <position position="99"/>
    </location>
    <ligand>
        <name>Zn(2+)</name>
        <dbReference type="ChEBI" id="CHEBI:29105"/>
        <label>2</label>
    </ligand>
</feature>
<feature type="binding site" evidence="1">
    <location>
        <position position="107"/>
    </location>
    <ligand>
        <name>Zn(2+)</name>
        <dbReference type="ChEBI" id="CHEBI:29105"/>
        <label>2</label>
    </ligand>
</feature>
<feature type="binding site" evidence="1">
    <location>
        <position position="175"/>
    </location>
    <ligand>
        <name>NAD(+)</name>
        <dbReference type="ChEBI" id="CHEBI:57540"/>
    </ligand>
</feature>
<feature type="binding site" evidence="1">
    <location>
        <position position="195"/>
    </location>
    <ligand>
        <name>NAD(+)</name>
        <dbReference type="ChEBI" id="CHEBI:57540"/>
    </ligand>
</feature>
<feature type="binding site" evidence="1">
    <location>
        <position position="200"/>
    </location>
    <ligand>
        <name>NAD(+)</name>
        <dbReference type="ChEBI" id="CHEBI:57540"/>
    </ligand>
</feature>
<feature type="binding site" evidence="1">
    <location>
        <begin position="262"/>
        <end position="264"/>
    </location>
    <ligand>
        <name>NAD(+)</name>
        <dbReference type="ChEBI" id="CHEBI:57540"/>
    </ligand>
</feature>
<feature type="binding site" evidence="1">
    <location>
        <begin position="286"/>
        <end position="287"/>
    </location>
    <ligand>
        <name>NAD(+)</name>
        <dbReference type="ChEBI" id="CHEBI:57540"/>
    </ligand>
</feature>
<feature type="site" description="Important for catalytic activity for the proton relay mechanism but does not participate directly in the coordination of zinc atom" evidence="1">
    <location>
        <position position="148"/>
    </location>
</feature>
<reference key="1">
    <citation type="submission" date="2007-10" db="EMBL/GenBank/DDBJ databases">
        <title>Complete sequence of Shewanella pealeana ATCC 700345.</title>
        <authorList>
            <consortium name="US DOE Joint Genome Institute"/>
            <person name="Copeland A."/>
            <person name="Lucas S."/>
            <person name="Lapidus A."/>
            <person name="Barry K."/>
            <person name="Glavina del Rio T."/>
            <person name="Dalin E."/>
            <person name="Tice H."/>
            <person name="Pitluck S."/>
            <person name="Chertkov O."/>
            <person name="Brettin T."/>
            <person name="Bruce D."/>
            <person name="Detter J.C."/>
            <person name="Han C."/>
            <person name="Schmutz J."/>
            <person name="Larimer F."/>
            <person name="Land M."/>
            <person name="Hauser L."/>
            <person name="Kyrpides N."/>
            <person name="Kim E."/>
            <person name="Zhao J.-S.Z."/>
            <person name="Manno D."/>
            <person name="Hawari J."/>
            <person name="Richardson P."/>
        </authorList>
    </citation>
    <scope>NUCLEOTIDE SEQUENCE [LARGE SCALE GENOMIC DNA]</scope>
    <source>
        <strain>ATCC 700345 / ANG-SQ1</strain>
    </source>
</reference>
<sequence length="341" mass="37237">MKALSKLKPEEGIWMVDAPKPEVGHNDLLIKIRKTAICGTDVHIYNWDEWSQNTIPVPMVVGHEYVGEVVGMGQEVRGFTIGDRVSGEGHITCGHCRNCRGGRTHLCRNTSGVGVNREGAFAEYLVIPAFNAFKIPDDISDDLASIFDPFGNAVHTALSFDLVGEDVLITGAGPIGIMAAAVCRHVGARHVVITDVNEYRLELAEKMGATRAVNVAKENLEDVMQELGMTEGFDVGLEMSGVPSAFHSMLDTMNHGGKIAMLGIPGGDMAIDWSKVIFKGLIIKGIYGREMFETWYKMASLIQSGLDISPIITHHYSIDEFQQGFDAMRSGQSGKVILNWD</sequence>